<comment type="subunit">
    <text evidence="1">Part of the 50S ribosomal subunit.</text>
</comment>
<comment type="similarity">
    <text evidence="1">Belongs to the bacterial ribosomal protein bL31 family. Type B subfamily.</text>
</comment>
<reference key="1">
    <citation type="journal article" date="2010" name="BMC Genomics">
        <title>Complete genome sequence and lifestyle of black-pigmented Corynebacterium aurimucosum ATCC 700975 (formerly C. nigricans CN-1) isolated from a vaginal swab of a woman with spontaneous abortion.</title>
        <authorList>
            <person name="Trost E."/>
            <person name="Gotker S."/>
            <person name="Schneider J."/>
            <person name="Schneiker-Bekel S."/>
            <person name="Szczepanowski R."/>
            <person name="Tilker A."/>
            <person name="Viehoever P."/>
            <person name="Arnold W."/>
            <person name="Bekel T."/>
            <person name="Blom J."/>
            <person name="Gartemann K.H."/>
            <person name="Linke B."/>
            <person name="Goesmann A."/>
            <person name="Puhler A."/>
            <person name="Shukla S.K."/>
            <person name="Tauch A."/>
        </authorList>
    </citation>
    <scope>NUCLEOTIDE SEQUENCE [LARGE SCALE GENOMIC DNA]</scope>
    <source>
        <strain>ATCC 700975 / DSM 44827 / CIP 107346 / CN-1</strain>
    </source>
</reference>
<name>RL31B_CORA7</name>
<sequence length="89" mass="10109">MKKDIHPDYHPVVFKDAGTGHSFLTKSTATSDRTVEWEDGNEYPLIVVDVTAESHPFWTGAQRVMDTAGRVEKFNQRFGAMARRKKKNA</sequence>
<gene>
    <name evidence="1" type="primary">rpmE2</name>
    <name type="ordered locus">cauri_0823</name>
</gene>
<feature type="chain" id="PRO_1000176984" description="Large ribosomal subunit protein bL31B">
    <location>
        <begin position="1"/>
        <end position="89"/>
    </location>
</feature>
<organism>
    <name type="scientific">Corynebacterium aurimucosum (strain ATCC 700975 / DSM 44827 / CIP 107346 / CN-1)</name>
    <name type="common">Corynebacterium nigricans</name>
    <dbReference type="NCBI Taxonomy" id="548476"/>
    <lineage>
        <taxon>Bacteria</taxon>
        <taxon>Bacillati</taxon>
        <taxon>Actinomycetota</taxon>
        <taxon>Actinomycetes</taxon>
        <taxon>Mycobacteriales</taxon>
        <taxon>Corynebacteriaceae</taxon>
        <taxon>Corynebacterium</taxon>
    </lineage>
</organism>
<accession>C3PF16</accession>
<proteinExistence type="inferred from homology"/>
<evidence type="ECO:0000255" key="1">
    <source>
        <dbReference type="HAMAP-Rule" id="MF_00502"/>
    </source>
</evidence>
<evidence type="ECO:0000305" key="2"/>
<protein>
    <recommendedName>
        <fullName evidence="1">Large ribosomal subunit protein bL31B</fullName>
    </recommendedName>
    <alternativeName>
        <fullName evidence="2">50S ribosomal protein L31 type B</fullName>
    </alternativeName>
</protein>
<keyword id="KW-1185">Reference proteome</keyword>
<keyword id="KW-0687">Ribonucleoprotein</keyword>
<keyword id="KW-0689">Ribosomal protein</keyword>
<dbReference type="EMBL" id="CP001601">
    <property type="protein sequence ID" value="ACP32420.1"/>
    <property type="molecule type" value="Genomic_DNA"/>
</dbReference>
<dbReference type="RefSeq" id="WP_005530151.1">
    <property type="nucleotide sequence ID" value="NZ_ACLH01000014.1"/>
</dbReference>
<dbReference type="SMR" id="C3PF16"/>
<dbReference type="STRING" id="548476.cauri_0823"/>
<dbReference type="KEGG" id="car:cauri_0823"/>
<dbReference type="eggNOG" id="COG0254">
    <property type="taxonomic scope" value="Bacteria"/>
</dbReference>
<dbReference type="HOGENOM" id="CLU_114306_2_1_11"/>
<dbReference type="OrthoDB" id="9803251at2"/>
<dbReference type="Proteomes" id="UP000002077">
    <property type="component" value="Chromosome"/>
</dbReference>
<dbReference type="GO" id="GO:1990904">
    <property type="term" value="C:ribonucleoprotein complex"/>
    <property type="evidence" value="ECO:0007669"/>
    <property type="project" value="UniProtKB-KW"/>
</dbReference>
<dbReference type="GO" id="GO:0005840">
    <property type="term" value="C:ribosome"/>
    <property type="evidence" value="ECO:0007669"/>
    <property type="project" value="UniProtKB-KW"/>
</dbReference>
<dbReference type="GO" id="GO:0003735">
    <property type="term" value="F:structural constituent of ribosome"/>
    <property type="evidence" value="ECO:0007669"/>
    <property type="project" value="InterPro"/>
</dbReference>
<dbReference type="GO" id="GO:0006412">
    <property type="term" value="P:translation"/>
    <property type="evidence" value="ECO:0007669"/>
    <property type="project" value="UniProtKB-UniRule"/>
</dbReference>
<dbReference type="Gene3D" id="4.10.830.30">
    <property type="entry name" value="Ribosomal protein L31"/>
    <property type="match status" value="1"/>
</dbReference>
<dbReference type="HAMAP" id="MF_00502">
    <property type="entry name" value="Ribosomal_bL31_2"/>
    <property type="match status" value="1"/>
</dbReference>
<dbReference type="InterPro" id="IPR034704">
    <property type="entry name" value="Ribosomal_bL28/bL31-like_sf"/>
</dbReference>
<dbReference type="InterPro" id="IPR002150">
    <property type="entry name" value="Ribosomal_bL31"/>
</dbReference>
<dbReference type="InterPro" id="IPR027493">
    <property type="entry name" value="Ribosomal_bL31_B"/>
</dbReference>
<dbReference type="InterPro" id="IPR042105">
    <property type="entry name" value="Ribosomal_bL31_sf"/>
</dbReference>
<dbReference type="NCBIfam" id="TIGR00105">
    <property type="entry name" value="L31"/>
    <property type="match status" value="1"/>
</dbReference>
<dbReference type="NCBIfam" id="NF002462">
    <property type="entry name" value="PRK01678.1"/>
    <property type="match status" value="1"/>
</dbReference>
<dbReference type="PANTHER" id="PTHR33280">
    <property type="entry name" value="50S RIBOSOMAL PROTEIN L31, CHLOROPLASTIC"/>
    <property type="match status" value="1"/>
</dbReference>
<dbReference type="PANTHER" id="PTHR33280:SF1">
    <property type="entry name" value="LARGE RIBOSOMAL SUBUNIT PROTEIN BL31C"/>
    <property type="match status" value="1"/>
</dbReference>
<dbReference type="Pfam" id="PF01197">
    <property type="entry name" value="Ribosomal_L31"/>
    <property type="match status" value="1"/>
</dbReference>
<dbReference type="PRINTS" id="PR01249">
    <property type="entry name" value="RIBOSOMALL31"/>
</dbReference>
<dbReference type="SUPFAM" id="SSF143800">
    <property type="entry name" value="L28p-like"/>
    <property type="match status" value="1"/>
</dbReference>
<dbReference type="PROSITE" id="PS01143">
    <property type="entry name" value="RIBOSOMAL_L31"/>
    <property type="match status" value="1"/>
</dbReference>